<dbReference type="EC" id="3.2.2.-" evidence="8"/>
<dbReference type="EMBL" id="AP008207">
    <property type="protein sequence ID" value="BAH90964.1"/>
    <property type="status" value="ALT_SEQ"/>
    <property type="molecule type" value="Genomic_DNA"/>
</dbReference>
<dbReference type="EMBL" id="AP014957">
    <property type="protein sequence ID" value="BAS71045.1"/>
    <property type="status" value="ALT_SEQ"/>
    <property type="molecule type" value="Genomic_DNA"/>
</dbReference>
<dbReference type="RefSeq" id="XP_015650539.1">
    <property type="nucleotide sequence ID" value="XM_015795053.1"/>
</dbReference>
<dbReference type="SMR" id="C7IW64"/>
<dbReference type="FunCoup" id="C7IW64">
    <property type="interactions" value="1620"/>
</dbReference>
<dbReference type="STRING" id="39947.C7IW64"/>
<dbReference type="PaxDb" id="39947-C7IW64"/>
<dbReference type="EnsemblPlants" id="Os01t0218032-01">
    <property type="protein sequence ID" value="Os01t0218032-01"/>
    <property type="gene ID" value="Os01g0218032"/>
</dbReference>
<dbReference type="GeneID" id="9271145"/>
<dbReference type="Gramene" id="Os01t0218032-01">
    <property type="protein sequence ID" value="Os01t0218032-01"/>
    <property type="gene ID" value="Os01g0218032"/>
</dbReference>
<dbReference type="KEGG" id="dosa:Os01g0217900"/>
<dbReference type="KEGG" id="osa:9271145"/>
<dbReference type="eggNOG" id="ENOG502QQKH">
    <property type="taxonomic scope" value="Eukaryota"/>
</dbReference>
<dbReference type="HOGENOM" id="CLU_2765416_0_0_1"/>
<dbReference type="InParanoid" id="C7IW64"/>
<dbReference type="OrthoDB" id="5607at2759"/>
<dbReference type="Proteomes" id="UP000000763">
    <property type="component" value="Chromosome 1"/>
</dbReference>
<dbReference type="Proteomes" id="UP000059680">
    <property type="component" value="Chromosome 1"/>
</dbReference>
<dbReference type="GO" id="GO:0005634">
    <property type="term" value="C:nucleus"/>
    <property type="evidence" value="ECO:0007669"/>
    <property type="project" value="UniProtKB-SubCell"/>
</dbReference>
<dbReference type="GO" id="GO:0051539">
    <property type="term" value="F:4 iron, 4 sulfur cluster binding"/>
    <property type="evidence" value="ECO:0007669"/>
    <property type="project" value="UniProtKB-KW"/>
</dbReference>
<dbReference type="GO" id="GO:0051747">
    <property type="term" value="F:cytosine C-5 DNA demethylase activity"/>
    <property type="evidence" value="ECO:0000314"/>
    <property type="project" value="UniProtKB"/>
</dbReference>
<dbReference type="GO" id="GO:0003677">
    <property type="term" value="F:DNA binding"/>
    <property type="evidence" value="ECO:0007669"/>
    <property type="project" value="UniProtKB-KW"/>
</dbReference>
<dbReference type="GO" id="GO:0035514">
    <property type="term" value="F:DNA demethylase activity"/>
    <property type="evidence" value="ECO:0000314"/>
    <property type="project" value="UniProtKB"/>
</dbReference>
<dbReference type="GO" id="GO:0019104">
    <property type="term" value="F:DNA N-glycosylase activity"/>
    <property type="evidence" value="ECO:0007669"/>
    <property type="project" value="InterPro"/>
</dbReference>
<dbReference type="GO" id="GO:0046872">
    <property type="term" value="F:metal ion binding"/>
    <property type="evidence" value="ECO:0007669"/>
    <property type="project" value="UniProtKB-KW"/>
</dbReference>
<dbReference type="GO" id="GO:0006284">
    <property type="term" value="P:base-excision repair"/>
    <property type="evidence" value="ECO:0007669"/>
    <property type="project" value="InterPro"/>
</dbReference>
<dbReference type="GO" id="GO:0141166">
    <property type="term" value="P:chromosomal 5-methylcytosine DNA demethylation pathway"/>
    <property type="evidence" value="ECO:0007669"/>
    <property type="project" value="InterPro"/>
</dbReference>
<dbReference type="GO" id="GO:0040029">
    <property type="term" value="P:epigenetic regulation of gene expression"/>
    <property type="evidence" value="ECO:0000314"/>
    <property type="project" value="UniProtKB"/>
</dbReference>
<dbReference type="CDD" id="cd00056">
    <property type="entry name" value="ENDO3c"/>
    <property type="match status" value="1"/>
</dbReference>
<dbReference type="FunFam" id="1.10.1670.10:FF:000004">
    <property type="entry name" value="DNA glycosylase/AP lyase ROS1"/>
    <property type="match status" value="1"/>
</dbReference>
<dbReference type="Gene3D" id="1.10.1670.10">
    <property type="entry name" value="Helix-hairpin-Helix base-excision DNA repair enzymes (C-terminal)"/>
    <property type="match status" value="1"/>
</dbReference>
<dbReference type="InterPro" id="IPR044811">
    <property type="entry name" value="DME/ROS1"/>
</dbReference>
<dbReference type="InterPro" id="IPR011257">
    <property type="entry name" value="DNA_glycosylase"/>
</dbReference>
<dbReference type="InterPro" id="IPR003651">
    <property type="entry name" value="Endonuclease3_FeS-loop_motif"/>
</dbReference>
<dbReference type="InterPro" id="IPR003265">
    <property type="entry name" value="HhH-GPD_domain"/>
</dbReference>
<dbReference type="InterPro" id="IPR023170">
    <property type="entry name" value="HhH_base_excis_C"/>
</dbReference>
<dbReference type="InterPro" id="IPR028924">
    <property type="entry name" value="Perm-CXXC"/>
</dbReference>
<dbReference type="InterPro" id="IPR028925">
    <property type="entry name" value="RRM_DME"/>
</dbReference>
<dbReference type="PANTHER" id="PTHR46213:SF13">
    <property type="entry name" value="DEMETER-LIKE PROTEIN 2-RELATED"/>
    <property type="match status" value="1"/>
</dbReference>
<dbReference type="PANTHER" id="PTHR46213">
    <property type="entry name" value="TRANSCRIPTIONAL ACTIVATOR DEMETER"/>
    <property type="match status" value="1"/>
</dbReference>
<dbReference type="Pfam" id="PF15629">
    <property type="entry name" value="Perm-CXXC"/>
    <property type="match status" value="1"/>
</dbReference>
<dbReference type="Pfam" id="PF15628">
    <property type="entry name" value="RRM_DME"/>
    <property type="match status" value="1"/>
</dbReference>
<dbReference type="SMART" id="SM00478">
    <property type="entry name" value="ENDO3c"/>
    <property type="match status" value="1"/>
</dbReference>
<dbReference type="SMART" id="SM00525">
    <property type="entry name" value="FES"/>
    <property type="match status" value="1"/>
</dbReference>
<dbReference type="SUPFAM" id="SSF48150">
    <property type="entry name" value="DNA-glycosylase"/>
    <property type="match status" value="1"/>
</dbReference>
<organism>
    <name type="scientific">Oryza sativa subsp. japonica</name>
    <name type="common">Rice</name>
    <dbReference type="NCBI Taxonomy" id="39947"/>
    <lineage>
        <taxon>Eukaryota</taxon>
        <taxon>Viridiplantae</taxon>
        <taxon>Streptophyta</taxon>
        <taxon>Embryophyta</taxon>
        <taxon>Tracheophyta</taxon>
        <taxon>Spermatophyta</taxon>
        <taxon>Magnoliopsida</taxon>
        <taxon>Liliopsida</taxon>
        <taxon>Poales</taxon>
        <taxon>Poaceae</taxon>
        <taxon>BOP clade</taxon>
        <taxon>Oryzoideae</taxon>
        <taxon>Oryzeae</taxon>
        <taxon>Oryzinae</taxon>
        <taxon>Oryza</taxon>
        <taxon>Oryza sativa</taxon>
    </lineage>
</organism>
<reference key="1">
    <citation type="journal article" date="2002" name="Nature">
        <title>The genome sequence and structure of rice chromosome 1.</title>
        <authorList>
            <person name="Sasaki T."/>
            <person name="Matsumoto T."/>
            <person name="Yamamoto K."/>
            <person name="Sakata K."/>
            <person name="Baba T."/>
            <person name="Katayose Y."/>
            <person name="Wu J."/>
            <person name="Niimura Y."/>
            <person name="Cheng Z."/>
            <person name="Nagamura Y."/>
            <person name="Antonio B.A."/>
            <person name="Kanamori H."/>
            <person name="Hosokawa S."/>
            <person name="Masukawa M."/>
            <person name="Arikawa K."/>
            <person name="Chiden Y."/>
            <person name="Hayashi M."/>
            <person name="Okamoto M."/>
            <person name="Ando T."/>
            <person name="Aoki H."/>
            <person name="Arita K."/>
            <person name="Hamada M."/>
            <person name="Harada C."/>
            <person name="Hijishita S."/>
            <person name="Honda M."/>
            <person name="Ichikawa Y."/>
            <person name="Idonuma A."/>
            <person name="Iijima M."/>
            <person name="Ikeda M."/>
            <person name="Ikeno M."/>
            <person name="Ito S."/>
            <person name="Ito T."/>
            <person name="Ito Y."/>
            <person name="Ito Y."/>
            <person name="Iwabuchi A."/>
            <person name="Kamiya K."/>
            <person name="Karasawa W."/>
            <person name="Katagiri S."/>
            <person name="Kikuta A."/>
            <person name="Kobayashi N."/>
            <person name="Kono I."/>
            <person name="Machita K."/>
            <person name="Maehara T."/>
            <person name="Mizuno H."/>
            <person name="Mizubayashi T."/>
            <person name="Mukai Y."/>
            <person name="Nagasaki H."/>
            <person name="Nakashima M."/>
            <person name="Nakama Y."/>
            <person name="Nakamichi Y."/>
            <person name="Nakamura M."/>
            <person name="Namiki N."/>
            <person name="Negishi M."/>
            <person name="Ohta I."/>
            <person name="Ono N."/>
            <person name="Saji S."/>
            <person name="Sakai K."/>
            <person name="Shibata M."/>
            <person name="Shimokawa T."/>
            <person name="Shomura A."/>
            <person name="Song J."/>
            <person name="Takazaki Y."/>
            <person name="Terasawa K."/>
            <person name="Tsuji K."/>
            <person name="Waki K."/>
            <person name="Yamagata H."/>
            <person name="Yamane H."/>
            <person name="Yoshiki S."/>
            <person name="Yoshihara R."/>
            <person name="Yukawa K."/>
            <person name="Zhong H."/>
            <person name="Iwama H."/>
            <person name="Endo T."/>
            <person name="Ito H."/>
            <person name="Hahn J.H."/>
            <person name="Kim H.-I."/>
            <person name="Eun M.-Y."/>
            <person name="Yano M."/>
            <person name="Jiang J."/>
            <person name="Gojobori T."/>
        </authorList>
    </citation>
    <scope>NUCLEOTIDE SEQUENCE [LARGE SCALE GENOMIC DNA]</scope>
    <source>
        <strain>cv. Nipponbare</strain>
    </source>
</reference>
<reference key="2">
    <citation type="journal article" date="2005" name="Nature">
        <title>The map-based sequence of the rice genome.</title>
        <authorList>
            <consortium name="International rice genome sequencing project (IRGSP)"/>
        </authorList>
    </citation>
    <scope>NUCLEOTIDE SEQUENCE [LARGE SCALE GENOMIC DNA]</scope>
    <source>
        <strain>cv. Nipponbare</strain>
    </source>
</reference>
<reference key="3">
    <citation type="journal article" date="2008" name="Nucleic Acids Res.">
        <title>The rice annotation project database (RAP-DB): 2008 update.</title>
        <authorList>
            <consortium name="The rice annotation project (RAP)"/>
        </authorList>
    </citation>
    <scope>GENOME REANNOTATION</scope>
    <source>
        <strain>cv. Nipponbare</strain>
    </source>
</reference>
<reference key="4">
    <citation type="journal article" date="2013" name="Rice">
        <title>Improvement of the Oryza sativa Nipponbare reference genome using next generation sequence and optical map data.</title>
        <authorList>
            <person name="Kawahara Y."/>
            <person name="de la Bastide M."/>
            <person name="Hamilton J.P."/>
            <person name="Kanamori H."/>
            <person name="McCombie W.R."/>
            <person name="Ouyang S."/>
            <person name="Schwartz D.C."/>
            <person name="Tanaka T."/>
            <person name="Wu J."/>
            <person name="Zhou S."/>
            <person name="Childs K.L."/>
            <person name="Davidson R.M."/>
            <person name="Lin H."/>
            <person name="Quesada-Ocampo L."/>
            <person name="Vaillancourt B."/>
            <person name="Sakai H."/>
            <person name="Lee S.S."/>
            <person name="Kim J."/>
            <person name="Numa H."/>
            <person name="Itoh T."/>
            <person name="Buell C.R."/>
            <person name="Matsumoto T."/>
        </authorList>
    </citation>
    <scope>GENOME REANNOTATION</scope>
    <source>
        <strain>cv. Nipponbare</strain>
    </source>
</reference>
<reference key="5">
    <citation type="journal article" date="2012" name="Plant J.">
        <title>A null mutation of ROS1a for DNA demethylation in rice is not transmittable to progeny.</title>
        <authorList>
            <person name="Ono A."/>
            <person name="Yamaguchi K."/>
            <person name="Fukada-Tanaka S."/>
            <person name="Terada R."/>
            <person name="Mitsui T."/>
            <person name="Iida S."/>
        </authorList>
    </citation>
    <scope>FUNCTION</scope>
    <scope>TISSUE SPECIFICITY</scope>
    <scope>DISRUPTION PHENOTYPE</scope>
</reference>
<reference key="6">
    <citation type="journal article" date="2018" name="Proc. Natl. Acad. Sci. U.S.A.">
        <title>Mutations in the DNA demethylase OsROS1 result in a thickened aleurone and improved nutritional value in rice grains.</title>
        <authorList>
            <person name="Liu J."/>
            <person name="Wu X."/>
            <person name="Yao X."/>
            <person name="Yu R."/>
            <person name="Larkin P.J."/>
            <person name="Liu C.M."/>
        </authorList>
    </citation>
    <scope>FUNCTION</scope>
    <scope>TISSUE SPECIFICITY</scope>
    <scope>BIOTECHNOLOGY</scope>
    <scope>MUTAGENESIS OF ALA-441; ARG-482; SER-1357; SER-1413; ASP-1425 AND GLU-1856</scope>
</reference>
<name>ROS1A_ORYSJ</name>
<feature type="chain" id="PRO_0000445979" description="Protein ROS1A">
    <location>
        <begin position="1"/>
        <end position="1952"/>
    </location>
</feature>
<feature type="region of interest" description="Disordered" evidence="3">
    <location>
        <begin position="72"/>
        <end position="157"/>
    </location>
</feature>
<feature type="region of interest" description="Disordered" evidence="3">
    <location>
        <begin position="693"/>
        <end position="778"/>
    </location>
</feature>
<feature type="region of interest" description="Disordered" evidence="3">
    <location>
        <begin position="1302"/>
        <end position="1334"/>
    </location>
</feature>
<feature type="region of interest" description="Disordered" evidence="3">
    <location>
        <begin position="1367"/>
        <end position="1398"/>
    </location>
</feature>
<feature type="compositionally biased region" description="Basic residues" evidence="3">
    <location>
        <begin position="90"/>
        <end position="102"/>
    </location>
</feature>
<feature type="compositionally biased region" description="Basic residues" evidence="3">
    <location>
        <begin position="130"/>
        <end position="139"/>
    </location>
</feature>
<feature type="compositionally biased region" description="Basic and acidic residues" evidence="3">
    <location>
        <begin position="709"/>
        <end position="720"/>
    </location>
</feature>
<feature type="compositionally biased region" description="Basic and acidic residues" evidence="3">
    <location>
        <begin position="727"/>
        <end position="747"/>
    </location>
</feature>
<feature type="compositionally biased region" description="Polar residues" evidence="3">
    <location>
        <begin position="769"/>
        <end position="778"/>
    </location>
</feature>
<feature type="compositionally biased region" description="Basic residues" evidence="3">
    <location>
        <begin position="1388"/>
        <end position="1398"/>
    </location>
</feature>
<feature type="binding site" evidence="2">
    <location>
        <position position="1582"/>
    </location>
    <ligand>
        <name>[4Fe-4S] cluster</name>
        <dbReference type="ChEBI" id="CHEBI:49883"/>
    </ligand>
</feature>
<feature type="binding site" evidence="2">
    <location>
        <position position="1589"/>
    </location>
    <ligand>
        <name>[4Fe-4S] cluster</name>
        <dbReference type="ChEBI" id="CHEBI:49883"/>
    </ligand>
</feature>
<feature type="binding site" evidence="2">
    <location>
        <position position="1592"/>
    </location>
    <ligand>
        <name>[4Fe-4S] cluster</name>
        <dbReference type="ChEBI" id="CHEBI:49883"/>
    </ligand>
</feature>
<feature type="binding site" evidence="2">
    <location>
        <position position="1598"/>
    </location>
    <ligand>
        <name>[4Fe-4S] cluster</name>
        <dbReference type="ChEBI" id="CHEBI:49883"/>
    </ligand>
</feature>
<feature type="mutagenesis site" description="In ta2-6; increased number of aleurone cell layers in the grain." evidence="5">
    <original>A</original>
    <variation>V</variation>
    <location>
        <position position="441"/>
    </location>
</feature>
<feature type="mutagenesis site" description="In ta2-5; increased number of aleurone cell layers in the grain." evidence="5">
    <original>R</original>
    <variation>K</variation>
    <location>
        <position position="482"/>
    </location>
</feature>
<feature type="mutagenesis site" description="In ta2-4; increased number of aleurone cell layers in the grain." evidence="5">
    <original>S</original>
    <variation>F</variation>
    <location>
        <position position="1357"/>
    </location>
</feature>
<feature type="mutagenesis site" description="In ta2-3; increased number of aleurone cell layers in the grain." evidence="5">
    <original>S</original>
    <variation>N</variation>
    <location>
        <position position="1413"/>
    </location>
</feature>
<feature type="mutagenesis site" description="In ta2-2; increased number of aleurone cell layers in the grain." evidence="5">
    <original>D</original>
    <variation>N</variation>
    <location>
        <position position="1425"/>
    </location>
</feature>
<feature type="mutagenesis site" description="In ta2-1; increased number of aleurone cell layers in the grain." evidence="5">
    <original>E</original>
    <variation>ECSNVMRQ</variation>
    <location>
        <position position="1856"/>
    </location>
</feature>
<keyword id="KW-0004">4Fe-4S</keyword>
<keyword id="KW-0238">DNA-binding</keyword>
<keyword id="KW-0378">Hydrolase</keyword>
<keyword id="KW-0408">Iron</keyword>
<keyword id="KW-0411">Iron-sulfur</keyword>
<keyword id="KW-0479">Metal-binding</keyword>
<keyword id="KW-0539">Nucleus</keyword>
<keyword id="KW-1185">Reference proteome</keyword>
<accession>C7IW64</accession>
<proteinExistence type="evidence at protein level"/>
<sequence length="1952" mass="215862">MQDFGQWLPQSQTTADLYFSSIPIPSQFDTSIETQTRTSAVVSSEKESANSFVPHNGTGLVERISNDAGLTEVVGSSAGPTECIDLNKTPARKPKKKKHRPKVLKDDKPSKTPKSATPIPSTEKVEKPSGKRKYVRKKTSPGQPPAEQAASSHCRSELKSVKRSLDFGGEVLQESTQSGSQVPVAEICTGPKRQSIPSTIQRDSQSQLACHVVSSTSSIHTSASQMVNAHLFPPDNMPNGVLLDLNNSTSQLQNEHAKFVDSPARLFGSRIRQTSGKNSLLEIYAGMSDRNVPDLNSSISQTHSMSTDFAQYLLSSSQASVRETQMANQMLNGHRMPENPITPSHCIERAALKEHLNHVPHAKAAVMNGQMPHSYRLAQNPILPPNHIEGYQVMENLSELVTTNDYLTASPFSQTGAANRQHNIGDSMHIHALDPRRESNASSGSWISLGVNFNQQNNGWASAGAADAASSHAPYFSEPHKRMRTAYLNNYPNGVVGHFSTSSTDLSNNENENVASAINSNVFTLADAQRLIAREKSRASQRMISFRSSKNDMVNRSEMVHQHGRPAPHGSACRESIEVPDKQFGLMTEELTQLPSMPNNPQREKYIPQTGSCQLQSLEHDMVKGHNLAGELHKQVTSPQVVIQSNFCVTPPDVLGRRTSGEHLRTLIAPTHASTCKDTLKALSCQLESSRDIIRPPVNPIGPSSADVPRTDNHQVKVSEETVTAKLPEKRKVGRPRKELKPGEKPKPRGRPRKGKVVGGELASKDSHTNPLQNESTSCSYGPYAGEASVGRAVKANRVGENISGAMVSLLDSLDIVIQKIKVLDINKSEDPVTAEPHGALVPYNGEFGPIVPFEGKVKRKRSRAKVDLDPVTALMWKLLMGPDMSDCAEGMDKDKEKWLNEERKIFQGRVDSFIARMHLVQGDRRFSPWKGSVVDSVVGVFLTQNVSDHLSSSAFMALAAKFPVKPEASEKPANVMFHTISENGDCSGLFGNSVKLQGEILVQEASNTAASFITTEDKEGSNSVELLGSSFGDGVDGAAGVYSNIYENLPARLHATRRPVVQTGNAVEAEDGSLEGVVSSENSTISSQNSSDYLFHMSDHMFSSMLLNFTAEDIGSRNMPKATRTTYTELLRMQELKNKSNETIESSEYHGVPVSCSNNIQVLNGIQNIGSKHQPLHSSISYHQTGQVHLPDIVHASDLEQSVYTGLNRVLDSNVTQTSYYPSPHPGIACNNETQKADSLSNMLYGIDRSDKTTSLSEPTPRIDNCFQPLSSEKMSFAREQSSSENYLSRNEAEAAFVKQHGTSNVQGDNTVRTEQNGGENSQSGYSQQDDNVGFQTATTSNLYSSNLCQNQKANSEVLHGVSSNLIENSKDDKKTSPKVPVDGSKAKRPRVGAGKKKTYDWDMLRKEVLYSHGNKERSQNAKDSIDWETIRQAEVKEISDTIRERGMNNMLAERIKDFLNRLVRDHGSIDLEWLRYVDSDKAKDYLLSIRGLGLKSVECVRLLTLHHMAFPVDTNVGRICVRLGWVPLQPLPESLQLHLLEMYPMLENIQKYLWPRLCKLDQRTLYELHYQMITFGKVFCTKSKPNCNACPMRAECKHFASAFASARLALPGPEEKSLVTSGTPIAAETFHQTYISSRPVVSQLEWNSNTCHHGMNNRQPIIEEPASPEPEHETEEMKECAIEDSFVDDPEEIPTIKLNFEEFTQNLKSYMQANNIEIEDADMSKALVAITPEVASIPTPKLKNVSRLRTEHQVYELPDSHPLLEGFNQREPDDPCPYLLSIWTPGETAQSTDAPKSVCNSQENGELCASNTCFSCNSIREAQAQKVRGTLLIPCRTAMRGSFPLNGTYFQVNEVFADHDSSRNPIDVPRSWIWNLPRRTVYFGTSIPTIFKGLTTEEIQHCFWRGFVCVRGFDRTSRAPRPLYARLHFPASKITRNKKSAGSAPGRDDE</sequence>
<gene>
    <name evidence="6" type="primary">ROS1A</name>
    <name evidence="7" type="synonym">ROS1</name>
    <name evidence="7" type="synonym">TA2</name>
    <name evidence="10" type="ordered locus">Os01g0218032</name>
    <name evidence="8" type="ordered locus">LOC_Os01g11900</name>
</gene>
<comment type="function">
    <text evidence="4 5 9">Bifunctional DNA glycosylase/lyase, which excises 5-methylcytosine (5-meC) and 5-hydroxymethylcytosine (5-hmeC), leaving an apyrimidinic (AP) site that is subsequently incised by the lyase activity (Probable). DNA demethylase that is indispensable in both male and female gametophyte development (PubMed:22448681). Involved in the regulation of DNA methylation in the promoters of RISBZ1/BZIP58 and DOF3/RPBF, two transcription factors that functions synergistically to positively regulate genes that are key players in the development of aleurone layers (PubMed:30275307). Active DNA demethylation carried out by ROS1A in rice endosperms may restrict the number of aleurone cell layers (PubMed:30275307).</text>
</comment>
<comment type="cofactor">
    <cofactor evidence="2">
        <name>[4Fe-4S] cluster</name>
        <dbReference type="ChEBI" id="CHEBI:49883"/>
    </cofactor>
    <text evidence="2">Binds 1 [4Fe-4S] cluster. The cluster does not appear to play a role in catalysis, but is probably involved in the proper positioning of the enzyme along the DNA strand.</text>
</comment>
<comment type="subcellular location">
    <subcellularLocation>
        <location evidence="1">Nucleus</location>
    </subcellularLocation>
</comment>
<comment type="tissue specificity">
    <text evidence="4 5">Expressed in roots, leaf blades, leaf sheaths, apical and lateral shoot meristems, inflorescence meristems, lodicules, pollen grains, ovules and seeds (PubMed:22448681). Expressed in vascular tissues of roots and leaves, pollen grains, pericarp, aleurone, and starchy endosperm (PubMed:30275307).</text>
</comment>
<comment type="disruption phenotype">
    <text evidence="4">Sterility and inability to set normal seeds due to severe defects in both male and female gametogenesis.</text>
</comment>
<comment type="biotechnology">
    <text evidence="5">Reducing ROS1A activity may be a potential tool to increase aleurone content, and improve the nutritional value of rice grains (PubMed:30275307). Aleurone cells are rich in an array of proteins, vitamins and minerals (PubMed:30275307).</text>
</comment>
<comment type="similarity">
    <text evidence="8">Belongs to the DNA glycosylase family. DEMETER subfamily.</text>
</comment>
<comment type="sequence caution" evidence="8">
    <conflict type="erroneous gene model prediction">
        <sequence resource="EMBL-CDS" id="BAH90964"/>
    </conflict>
</comment>
<comment type="sequence caution" evidence="8">
    <conflict type="erroneous gene model prediction">
        <sequence resource="EMBL-CDS" id="BAS71045"/>
    </conflict>
</comment>
<evidence type="ECO:0000250" key="1">
    <source>
        <dbReference type="UniProtKB" id="B8YIE8"/>
    </source>
</evidence>
<evidence type="ECO:0000250" key="2">
    <source>
        <dbReference type="UniProtKB" id="P0AB83"/>
    </source>
</evidence>
<evidence type="ECO:0000256" key="3">
    <source>
        <dbReference type="SAM" id="MobiDB-lite"/>
    </source>
</evidence>
<evidence type="ECO:0000269" key="4">
    <source>
    </source>
</evidence>
<evidence type="ECO:0000269" key="5">
    <source>
    </source>
</evidence>
<evidence type="ECO:0000303" key="6">
    <source>
    </source>
</evidence>
<evidence type="ECO:0000303" key="7">
    <source>
    </source>
</evidence>
<evidence type="ECO:0000305" key="8"/>
<evidence type="ECO:0000305" key="9">
    <source>
    </source>
</evidence>
<evidence type="ECO:0000312" key="10">
    <source>
        <dbReference type="EMBL" id="BAS71045.1"/>
    </source>
</evidence>
<protein>
    <recommendedName>
        <fullName evidence="6">Protein ROS1A</fullName>
        <ecNumber evidence="8">3.2.2.-</ecNumber>
    </recommendedName>
    <alternativeName>
        <fullName evidence="8">Protein REPRESSOR OF SILENCING 1 homolog a</fullName>
    </alternativeName>
    <alternativeName>
        <fullName evidence="7">Protein ROS1 homolog</fullName>
        <shortName evidence="7">OsROS1</shortName>
    </alternativeName>
    <alternativeName>
        <fullName evidence="7">Protein THICK ALEURONE 2</fullName>
    </alternativeName>
</protein>